<protein>
    <recommendedName>
        <fullName evidence="1">Lipoprotein signal peptidase</fullName>
        <ecNumber evidence="1">3.4.23.36</ecNumber>
    </recommendedName>
    <alternativeName>
        <fullName evidence="1">Prolipoprotein signal peptidase</fullName>
    </alternativeName>
    <alternativeName>
        <fullName evidence="1">Signal peptidase II</fullName>
        <shortName evidence="1">SPase II</shortName>
    </alternativeName>
</protein>
<accession>B9KGU3</accession>
<proteinExistence type="inferred from homology"/>
<organism>
    <name type="scientific">Anaplasma marginale (strain Florida)</name>
    <dbReference type="NCBI Taxonomy" id="320483"/>
    <lineage>
        <taxon>Bacteria</taxon>
        <taxon>Pseudomonadati</taxon>
        <taxon>Pseudomonadota</taxon>
        <taxon>Alphaproteobacteria</taxon>
        <taxon>Rickettsiales</taxon>
        <taxon>Anaplasmataceae</taxon>
        <taxon>Anaplasma</taxon>
    </lineage>
</organism>
<feature type="chain" id="PRO_1000123480" description="Lipoprotein signal peptidase">
    <location>
        <begin position="1"/>
        <end position="170"/>
    </location>
</feature>
<feature type="transmembrane region" description="Helical" evidence="1">
    <location>
        <begin position="5"/>
        <end position="25"/>
    </location>
</feature>
<feature type="transmembrane region" description="Helical" evidence="1">
    <location>
        <begin position="62"/>
        <end position="82"/>
    </location>
</feature>
<feature type="transmembrane region" description="Helical" evidence="1">
    <location>
        <begin position="89"/>
        <end position="111"/>
    </location>
</feature>
<feature type="transmembrane region" description="Helical" evidence="1">
    <location>
        <begin position="126"/>
        <end position="146"/>
    </location>
</feature>
<feature type="active site" evidence="1">
    <location>
        <position position="115"/>
    </location>
</feature>
<feature type="active site" evidence="1">
    <location>
        <position position="133"/>
    </location>
</feature>
<keyword id="KW-0064">Aspartyl protease</keyword>
<keyword id="KW-0997">Cell inner membrane</keyword>
<keyword id="KW-1003">Cell membrane</keyword>
<keyword id="KW-0378">Hydrolase</keyword>
<keyword id="KW-0472">Membrane</keyword>
<keyword id="KW-0645">Protease</keyword>
<keyword id="KW-1185">Reference proteome</keyword>
<keyword id="KW-0812">Transmembrane</keyword>
<keyword id="KW-1133">Transmembrane helix</keyword>
<name>LSPA_ANAMF</name>
<dbReference type="EC" id="3.4.23.36" evidence="1"/>
<dbReference type="EMBL" id="CP001079">
    <property type="protein sequence ID" value="ACM49647.1"/>
    <property type="molecule type" value="Genomic_DNA"/>
</dbReference>
<dbReference type="RefSeq" id="WP_010265985.1">
    <property type="nucleotide sequence ID" value="NC_012026.1"/>
</dbReference>
<dbReference type="SMR" id="B9KGU3"/>
<dbReference type="STRING" id="320483.AMF_816"/>
<dbReference type="GeneID" id="7398666"/>
<dbReference type="KEGG" id="amf:AMF_816"/>
<dbReference type="PATRIC" id="fig|320483.3.peg.941"/>
<dbReference type="eggNOG" id="COG0597">
    <property type="taxonomic scope" value="Bacteria"/>
</dbReference>
<dbReference type="HOGENOM" id="CLU_083252_4_3_5"/>
<dbReference type="UniPathway" id="UPA00665"/>
<dbReference type="Proteomes" id="UP000007307">
    <property type="component" value="Chromosome"/>
</dbReference>
<dbReference type="GO" id="GO:0005886">
    <property type="term" value="C:plasma membrane"/>
    <property type="evidence" value="ECO:0007669"/>
    <property type="project" value="UniProtKB-SubCell"/>
</dbReference>
<dbReference type="GO" id="GO:0004190">
    <property type="term" value="F:aspartic-type endopeptidase activity"/>
    <property type="evidence" value="ECO:0007669"/>
    <property type="project" value="UniProtKB-UniRule"/>
</dbReference>
<dbReference type="GO" id="GO:0006508">
    <property type="term" value="P:proteolysis"/>
    <property type="evidence" value="ECO:0007669"/>
    <property type="project" value="UniProtKB-KW"/>
</dbReference>
<dbReference type="HAMAP" id="MF_00161">
    <property type="entry name" value="LspA"/>
    <property type="match status" value="1"/>
</dbReference>
<dbReference type="InterPro" id="IPR001872">
    <property type="entry name" value="Peptidase_A8"/>
</dbReference>
<dbReference type="NCBIfam" id="TIGR00077">
    <property type="entry name" value="lspA"/>
    <property type="match status" value="1"/>
</dbReference>
<dbReference type="NCBIfam" id="NF011357">
    <property type="entry name" value="PRK14775.1"/>
    <property type="match status" value="1"/>
</dbReference>
<dbReference type="PANTHER" id="PTHR33695">
    <property type="entry name" value="LIPOPROTEIN SIGNAL PEPTIDASE"/>
    <property type="match status" value="1"/>
</dbReference>
<dbReference type="PANTHER" id="PTHR33695:SF1">
    <property type="entry name" value="LIPOPROTEIN SIGNAL PEPTIDASE"/>
    <property type="match status" value="1"/>
</dbReference>
<dbReference type="Pfam" id="PF01252">
    <property type="entry name" value="Peptidase_A8"/>
    <property type="match status" value="1"/>
</dbReference>
<dbReference type="PRINTS" id="PR00781">
    <property type="entry name" value="LIPOSIGPTASE"/>
</dbReference>
<comment type="function">
    <text evidence="1">This protein specifically catalyzes the removal of signal peptides from prolipoproteins.</text>
</comment>
<comment type="catalytic activity">
    <reaction evidence="1">
        <text>Release of signal peptides from bacterial membrane prolipoproteins. Hydrolyzes -Xaa-Yaa-Zaa-|-(S,diacylglyceryl)Cys-, in which Xaa is hydrophobic (preferably Leu), and Yaa (Ala or Ser) and Zaa (Gly or Ala) have small, neutral side chains.</text>
        <dbReference type="EC" id="3.4.23.36"/>
    </reaction>
</comment>
<comment type="pathway">
    <text evidence="1">Protein modification; lipoprotein biosynthesis (signal peptide cleavage).</text>
</comment>
<comment type="subcellular location">
    <subcellularLocation>
        <location evidence="1">Cell inner membrane</location>
        <topology evidence="1">Multi-pass membrane protein</topology>
    </subcellularLocation>
</comment>
<comment type="similarity">
    <text evidence="1">Belongs to the peptidase A8 family.</text>
</comment>
<evidence type="ECO:0000255" key="1">
    <source>
        <dbReference type="HAMAP-Rule" id="MF_00161"/>
    </source>
</evidence>
<sequence length="170" mass="18587">MKSKIVGVIAIVLVFALDQVSKAYAIDWYSQSGATEIFKFCSLVEVWNRGISFGMFGALESSNLIFTYVSLGVILMLFVLFVQSKCNKSTICMGVVIGGALGNLADRLRFGAVYDFISLHAGEFHWPAFNFADVCVTCGVICFLCLEVMYHAKACVDTSGDPDALSVKKY</sequence>
<reference key="1">
    <citation type="journal article" date="2009" name="BMC Genomics">
        <title>Conservation in the face of diversity: multistrain analysis of an intracellular bacterium.</title>
        <authorList>
            <person name="Dark M.J."/>
            <person name="Herndon D.R."/>
            <person name="Kappmeyer L.S."/>
            <person name="Gonzales M.P."/>
            <person name="Nordeen E."/>
            <person name="Palmer G.H."/>
            <person name="Knowles D.P. Jr."/>
            <person name="Brayton K.A."/>
        </authorList>
    </citation>
    <scope>NUCLEOTIDE SEQUENCE [LARGE SCALE GENOMIC DNA]</scope>
    <source>
        <strain>Florida</strain>
    </source>
</reference>
<gene>
    <name evidence="1" type="primary">lspA</name>
    <name type="ordered locus">AMF_816</name>
</gene>